<feature type="chain" id="PRO_0000093837" description="Vacuolar amino acid transporter 4">
    <location>
        <begin position="1"/>
        <end position="713"/>
    </location>
</feature>
<feature type="topological domain" description="Vacuolar" evidence="1">
    <location>
        <begin position="1"/>
        <end position="242"/>
    </location>
</feature>
<feature type="transmembrane region" description="Helical" evidence="1">
    <location>
        <begin position="243"/>
        <end position="263"/>
    </location>
</feature>
<feature type="topological domain" description="Cytoplasmic" evidence="1">
    <location>
        <begin position="264"/>
        <end position="301"/>
    </location>
</feature>
<feature type="transmembrane region" description="Helical" evidence="1">
    <location>
        <begin position="302"/>
        <end position="322"/>
    </location>
</feature>
<feature type="topological domain" description="Vacuolar" evidence="1">
    <location>
        <begin position="323"/>
        <end position="326"/>
    </location>
</feature>
<feature type="transmembrane region" description="Helical" evidence="1">
    <location>
        <begin position="327"/>
        <end position="347"/>
    </location>
</feature>
<feature type="topological domain" description="Cytoplasmic" evidence="1">
    <location>
        <begin position="348"/>
        <end position="373"/>
    </location>
</feature>
<feature type="transmembrane region" description="Helical" evidence="1">
    <location>
        <begin position="374"/>
        <end position="394"/>
    </location>
</feature>
<feature type="topological domain" description="Vacuolar" evidence="1">
    <location>
        <begin position="395"/>
        <end position="410"/>
    </location>
</feature>
<feature type="transmembrane region" description="Helical" evidence="1">
    <location>
        <begin position="411"/>
        <end position="431"/>
    </location>
</feature>
<feature type="topological domain" description="Cytoplasmic" evidence="1">
    <location>
        <begin position="432"/>
        <end position="438"/>
    </location>
</feature>
<feature type="transmembrane region" description="Helical" evidence="1">
    <location>
        <begin position="439"/>
        <end position="459"/>
    </location>
</feature>
<feature type="topological domain" description="Vacuolar" evidence="1">
    <location>
        <begin position="460"/>
        <end position="483"/>
    </location>
</feature>
<feature type="transmembrane region" description="Helical" evidence="1">
    <location>
        <begin position="484"/>
        <end position="504"/>
    </location>
</feature>
<feature type="topological domain" description="Cytoplasmic" evidence="1">
    <location>
        <begin position="505"/>
        <end position="515"/>
    </location>
</feature>
<feature type="transmembrane region" description="Helical" evidence="1">
    <location>
        <begin position="516"/>
        <end position="536"/>
    </location>
</feature>
<feature type="topological domain" description="Vacuolar" evidence="1">
    <location>
        <begin position="537"/>
        <end position="561"/>
    </location>
</feature>
<feature type="transmembrane region" description="Helical" evidence="1">
    <location>
        <begin position="562"/>
        <end position="582"/>
    </location>
</feature>
<feature type="topological domain" description="Cytoplasmic" evidence="1">
    <location>
        <begin position="583"/>
        <end position="621"/>
    </location>
</feature>
<feature type="transmembrane region" description="Helical" evidence="1">
    <location>
        <begin position="622"/>
        <end position="642"/>
    </location>
</feature>
<feature type="topological domain" description="Vacuolar" evidence="1">
    <location>
        <begin position="643"/>
        <end position="648"/>
    </location>
</feature>
<feature type="transmembrane region" description="Helical" evidence="1">
    <location>
        <begin position="649"/>
        <end position="669"/>
    </location>
</feature>
<feature type="topological domain" description="Cytoplasmic" evidence="1">
    <location>
        <begin position="670"/>
        <end position="692"/>
    </location>
</feature>
<feature type="transmembrane region" description="Helical" evidence="1">
    <location>
        <begin position="693"/>
        <end position="711"/>
    </location>
</feature>
<feature type="topological domain" description="Vacuolar" evidence="1">
    <location>
        <begin position="712"/>
        <end position="713"/>
    </location>
</feature>
<feature type="region of interest" description="Disordered" evidence="2">
    <location>
        <begin position="1"/>
        <end position="33"/>
    </location>
</feature>
<feature type="region of interest" description="Disordered" evidence="2">
    <location>
        <begin position="99"/>
        <end position="121"/>
    </location>
</feature>
<feature type="region of interest" description="Disordered" evidence="2">
    <location>
        <begin position="200"/>
        <end position="233"/>
    </location>
</feature>
<feature type="compositionally biased region" description="Polar residues" evidence="2">
    <location>
        <begin position="21"/>
        <end position="33"/>
    </location>
</feature>
<feature type="compositionally biased region" description="Low complexity" evidence="2">
    <location>
        <begin position="221"/>
        <end position="231"/>
    </location>
</feature>
<feature type="modified residue" description="Phosphoserine" evidence="6">
    <location>
        <position position="88"/>
    </location>
</feature>
<feature type="modified residue" description="Phosphoserine" evidence="6">
    <location>
        <position position="130"/>
    </location>
</feature>
<feature type="modified residue" description="Phosphoserine" evidence="5">
    <location>
        <position position="165"/>
    </location>
</feature>
<dbReference type="EMBL" id="Z50161">
    <property type="protein sequence ID" value="CAA90525.1"/>
    <property type="molecule type" value="Genomic_DNA"/>
</dbReference>
<dbReference type="EMBL" id="Z71377">
    <property type="protein sequence ID" value="CAA95977.1"/>
    <property type="molecule type" value="Genomic_DNA"/>
</dbReference>
<dbReference type="EMBL" id="BK006947">
    <property type="protein sequence ID" value="DAA10444.1"/>
    <property type="molecule type" value="Genomic_DNA"/>
</dbReference>
<dbReference type="PIR" id="S58251">
    <property type="entry name" value="S58251"/>
</dbReference>
<dbReference type="RefSeq" id="NP_014298.1">
    <property type="nucleotide sequence ID" value="NM_001182939.1"/>
</dbReference>
<dbReference type="SMR" id="P50944"/>
<dbReference type="BioGRID" id="35722">
    <property type="interactions" value="60"/>
</dbReference>
<dbReference type="DIP" id="DIP-6754N"/>
<dbReference type="FunCoup" id="P50944">
    <property type="interactions" value="718"/>
</dbReference>
<dbReference type="IntAct" id="P50944">
    <property type="interactions" value="3"/>
</dbReference>
<dbReference type="MINT" id="P50944"/>
<dbReference type="STRING" id="4932.YNL101W"/>
<dbReference type="TCDB" id="2.A.18.7.2">
    <property type="family name" value="the amino acid/auxin permease (aaap) family"/>
</dbReference>
<dbReference type="iPTMnet" id="P50944"/>
<dbReference type="PaxDb" id="4932-YNL101W"/>
<dbReference type="PeptideAtlas" id="P50944"/>
<dbReference type="EnsemblFungi" id="YNL101W_mRNA">
    <property type="protein sequence ID" value="YNL101W"/>
    <property type="gene ID" value="YNL101W"/>
</dbReference>
<dbReference type="GeneID" id="855622"/>
<dbReference type="KEGG" id="sce:YNL101W"/>
<dbReference type="AGR" id="SGD:S000005045"/>
<dbReference type="SGD" id="S000005045">
    <property type="gene designation" value="AVT4"/>
</dbReference>
<dbReference type="VEuPathDB" id="FungiDB:YNL101W"/>
<dbReference type="eggNOG" id="KOG1304">
    <property type="taxonomic scope" value="Eukaryota"/>
</dbReference>
<dbReference type="GeneTree" id="ENSGT00940000169842"/>
<dbReference type="HOGENOM" id="CLU_009646_3_2_1"/>
<dbReference type="InParanoid" id="P50944"/>
<dbReference type="OMA" id="YWCYYIL"/>
<dbReference type="OrthoDB" id="1684102at2759"/>
<dbReference type="BioCyc" id="YEAST:G3O-33129-MONOMER"/>
<dbReference type="Reactome" id="R-SCE-352230">
    <property type="pathway name" value="Amino acid transport across the plasma membrane"/>
</dbReference>
<dbReference type="Reactome" id="R-SCE-428559">
    <property type="pathway name" value="Proton-coupled neutral amino acid transporters"/>
</dbReference>
<dbReference type="Reactome" id="R-SCE-71240">
    <property type="pathway name" value="Tryptophan catabolism"/>
</dbReference>
<dbReference type="BioGRID-ORCS" id="855622">
    <property type="hits" value="0 hits in 10 CRISPR screens"/>
</dbReference>
<dbReference type="PRO" id="PR:P50944"/>
<dbReference type="Proteomes" id="UP000002311">
    <property type="component" value="Chromosome XIV"/>
</dbReference>
<dbReference type="RNAct" id="P50944">
    <property type="molecule type" value="protein"/>
</dbReference>
<dbReference type="GO" id="GO:0000324">
    <property type="term" value="C:fungal-type vacuole"/>
    <property type="evidence" value="ECO:0000314"/>
    <property type="project" value="SGD"/>
</dbReference>
<dbReference type="GO" id="GO:0000329">
    <property type="term" value="C:fungal-type vacuole membrane"/>
    <property type="evidence" value="ECO:0000315"/>
    <property type="project" value="SGD"/>
</dbReference>
<dbReference type="GO" id="GO:0005774">
    <property type="term" value="C:vacuolar membrane"/>
    <property type="evidence" value="ECO:0000318"/>
    <property type="project" value="GO_Central"/>
</dbReference>
<dbReference type="GO" id="GO:1990816">
    <property type="term" value="C:vacuole-mitochondrion membrane contact site"/>
    <property type="evidence" value="ECO:0000314"/>
    <property type="project" value="SGD"/>
</dbReference>
<dbReference type="GO" id="GO:0015186">
    <property type="term" value="F:L-glutamine transmembrane transporter activity"/>
    <property type="evidence" value="ECO:0000315"/>
    <property type="project" value="SGD"/>
</dbReference>
<dbReference type="GO" id="GO:0015188">
    <property type="term" value="F:L-isoleucine transmembrane transporter activity"/>
    <property type="evidence" value="ECO:0000315"/>
    <property type="project" value="SGD"/>
</dbReference>
<dbReference type="GO" id="GO:0005302">
    <property type="term" value="F:L-tyrosine transmembrane transporter activity"/>
    <property type="evidence" value="ECO:0000315"/>
    <property type="project" value="SGD"/>
</dbReference>
<dbReference type="GO" id="GO:0032974">
    <property type="term" value="P:amino acid transmembrane export from vacuole"/>
    <property type="evidence" value="ECO:0000315"/>
    <property type="project" value="SGD"/>
</dbReference>
<dbReference type="GO" id="GO:0003333">
    <property type="term" value="P:amino acid transmembrane transport"/>
    <property type="evidence" value="ECO:0000318"/>
    <property type="project" value="GO_Central"/>
</dbReference>
<dbReference type="InterPro" id="IPR013057">
    <property type="entry name" value="AA_transpt_TM"/>
</dbReference>
<dbReference type="PANTHER" id="PTHR22950">
    <property type="entry name" value="AMINO ACID TRANSPORTER"/>
    <property type="match status" value="1"/>
</dbReference>
<dbReference type="PANTHER" id="PTHR22950:SF666">
    <property type="entry name" value="VACUOLAR AMINO ACID TRANSPORTER 4"/>
    <property type="match status" value="1"/>
</dbReference>
<dbReference type="Pfam" id="PF01490">
    <property type="entry name" value="Aa_trans"/>
    <property type="match status" value="1"/>
</dbReference>
<comment type="function">
    <text evidence="3">Involved in amino acid efflux from the vacuole to the cytoplasm. Capable of transporting large neutral amino acids including tyrosine, glutamine, asparagine, isoleucine and leucine.</text>
</comment>
<comment type="subcellular location">
    <subcellularLocation>
        <location evidence="3">Vacuole membrane</location>
        <topology evidence="3">Multi-pass membrane protein</topology>
    </subcellularLocation>
</comment>
<comment type="similarity">
    <text evidence="4">Belongs to the amino acid/polyamine transporter 2 family.</text>
</comment>
<name>AVT4_YEAST</name>
<gene>
    <name type="primary">AVT4</name>
    <name type="ordered locus">YNL101W</name>
    <name type="ORF">N2185</name>
</gene>
<protein>
    <recommendedName>
        <fullName>Vacuolar amino acid transporter 4</fullName>
    </recommendedName>
</protein>
<organism>
    <name type="scientific">Saccharomyces cerevisiae (strain ATCC 204508 / S288c)</name>
    <name type="common">Baker's yeast</name>
    <dbReference type="NCBI Taxonomy" id="559292"/>
    <lineage>
        <taxon>Eukaryota</taxon>
        <taxon>Fungi</taxon>
        <taxon>Dikarya</taxon>
        <taxon>Ascomycota</taxon>
        <taxon>Saccharomycotina</taxon>
        <taxon>Saccharomycetes</taxon>
        <taxon>Saccharomycetales</taxon>
        <taxon>Saccharomycetaceae</taxon>
        <taxon>Saccharomyces</taxon>
    </lineage>
</organism>
<proteinExistence type="evidence at protein level"/>
<sequence>MVTNNGDGEHLGIRRNGNLRHPSNNMKIPRRAQSTVLNSNPFYSRKYSMSTLTPRDICRSVDSRVFVDMSSPNFQTLEDPHRDEIINSVRLNYLNSSKRSSVSHGNEAIPRVNPTKNSSASTIAAANVDSDDDETNLSSAGGDITHDIYKLVKAEDPKRLRRPRSMENVTPKIEHHTKLSSASGLNVPGGFRREFIVNKKRQEHQLNDSASSDFTSHESDSINQSSPSSNQDIDKVPFLTRNFLEFLYVFGHFAGESFEDDFIPDSSNMMIRGEDERSALLSRPDHMKVLPSAKGTTSTKKVFLILLKSFIGTGVLFLPNAFHNGGLFFSVSMLAFFGIYSYWCYYILVQAKSSCGVSSFGDIGLKLYGPWMRIIILFSLVITQVGFSGAYMIFTAKNLQAFLDNVFHVGVLPLSYLMVFQTIIFIPLSFIRNISKLSLPSLLANFFIMAGLVIVIIFTAKRLFFDLMGTPAMGVVYGLNADRWTLFIGTAIFAFEGIGLIIPVQDSMRNPEKFPLVLALVILTATILFISIATLGYLAYGSNVQTVILLNLPQSNIFVNLIQLFYSIAIMLSTPLQLFPAIKIIENKFFPKFTKIYVKHDDLTTRVELRPNSGKLNWKIKWLKNFIRSIIVIIVVSIAYFGSDNLDKFVSVIGSLACIPLVYIYPSMLHLRGNSLPETKGEFWRFKPMLDTILIFFGIASMLYTSYQSIFGV</sequence>
<evidence type="ECO:0000255" key="1"/>
<evidence type="ECO:0000256" key="2">
    <source>
        <dbReference type="SAM" id="MobiDB-lite"/>
    </source>
</evidence>
<evidence type="ECO:0000269" key="3">
    <source>
    </source>
</evidence>
<evidence type="ECO:0000305" key="4"/>
<evidence type="ECO:0007744" key="5">
    <source>
    </source>
</evidence>
<evidence type="ECO:0007744" key="6">
    <source>
    </source>
</evidence>
<keyword id="KW-0029">Amino-acid transport</keyword>
<keyword id="KW-0472">Membrane</keyword>
<keyword id="KW-0597">Phosphoprotein</keyword>
<keyword id="KW-1185">Reference proteome</keyword>
<keyword id="KW-0812">Transmembrane</keyword>
<keyword id="KW-1133">Transmembrane helix</keyword>
<keyword id="KW-0813">Transport</keyword>
<keyword id="KW-0926">Vacuole</keyword>
<reference key="1">
    <citation type="journal article" date="1996" name="Yeast">
        <title>The sequence of a 21.3 kb DNA fragment from the left arm of yeast chromosome XIV reveals LEU4, MET4, POL1, RAS2, and six new open reading frames.</title>
        <authorList>
            <person name="Saiz J.E."/>
            <person name="Buitrago M.J."/>
            <person name="Soler A."/>
            <person name="del Rey F."/>
            <person name="Revuelta J.L."/>
        </authorList>
    </citation>
    <scope>NUCLEOTIDE SEQUENCE [GENOMIC DNA]</scope>
    <source>
        <strain>ATCC 96604 / S288c / FY1679</strain>
    </source>
</reference>
<reference key="2">
    <citation type="journal article" date="1997" name="Nature">
        <title>The nucleotide sequence of Saccharomyces cerevisiae chromosome XIV and its evolutionary implications.</title>
        <authorList>
            <person name="Philippsen P."/>
            <person name="Kleine K."/>
            <person name="Poehlmann R."/>
            <person name="Duesterhoeft A."/>
            <person name="Hamberg K."/>
            <person name="Hegemann J.H."/>
            <person name="Obermaier B."/>
            <person name="Urrestarazu L.A."/>
            <person name="Aert R."/>
            <person name="Albermann K."/>
            <person name="Altmann R."/>
            <person name="Andre B."/>
            <person name="Baladron V."/>
            <person name="Ballesta J.P.G."/>
            <person name="Becam A.-M."/>
            <person name="Beinhauer J.D."/>
            <person name="Boskovic J."/>
            <person name="Buitrago M.J."/>
            <person name="Bussereau F."/>
            <person name="Coster F."/>
            <person name="Crouzet M."/>
            <person name="D'Angelo M."/>
            <person name="Dal Pero F."/>
            <person name="De Antoni A."/>
            <person name="del Rey F."/>
            <person name="Doignon F."/>
            <person name="Domdey H."/>
            <person name="Dubois E."/>
            <person name="Fiedler T.A."/>
            <person name="Fleig U."/>
            <person name="Floeth M."/>
            <person name="Fritz C."/>
            <person name="Gaillardin C."/>
            <person name="Garcia-Cantalejo J.M."/>
            <person name="Glansdorff N."/>
            <person name="Goffeau A."/>
            <person name="Gueldener U."/>
            <person name="Herbert C.J."/>
            <person name="Heumann K."/>
            <person name="Heuss-Neitzel D."/>
            <person name="Hilbert H."/>
            <person name="Hinni K."/>
            <person name="Iraqui Houssaini I."/>
            <person name="Jacquet M."/>
            <person name="Jimenez A."/>
            <person name="Jonniaux J.-L."/>
            <person name="Karpfinger-Hartl L."/>
            <person name="Lanfranchi G."/>
            <person name="Lepingle A."/>
            <person name="Levesque H."/>
            <person name="Lyck R."/>
            <person name="Maftahi M."/>
            <person name="Mallet L."/>
            <person name="Maurer C.T.C."/>
            <person name="Messenguy F."/>
            <person name="Mewes H.-W."/>
            <person name="Moestl D."/>
            <person name="Nasr F."/>
            <person name="Nicaud J.-M."/>
            <person name="Niedenthal R.K."/>
            <person name="Pandolfo D."/>
            <person name="Pierard A."/>
            <person name="Piravandi E."/>
            <person name="Planta R.J."/>
            <person name="Pohl T.M."/>
            <person name="Purnelle B."/>
            <person name="Rebischung C."/>
            <person name="Remacha M.A."/>
            <person name="Revuelta J.L."/>
            <person name="Rinke M."/>
            <person name="Saiz J.E."/>
            <person name="Sartorello F."/>
            <person name="Scherens B."/>
            <person name="Sen-Gupta M."/>
            <person name="Soler-Mira A."/>
            <person name="Urbanus J.H.M."/>
            <person name="Valle G."/>
            <person name="Van Dyck L."/>
            <person name="Verhasselt P."/>
            <person name="Vierendeels F."/>
            <person name="Vissers S."/>
            <person name="Voet M."/>
            <person name="Volckaert G."/>
            <person name="Wach A."/>
            <person name="Wambutt R."/>
            <person name="Wedler H."/>
            <person name="Zollner A."/>
            <person name="Hani J."/>
        </authorList>
    </citation>
    <scope>NUCLEOTIDE SEQUENCE [LARGE SCALE GENOMIC DNA]</scope>
    <source>
        <strain>ATCC 204508 / S288c</strain>
    </source>
</reference>
<reference key="3">
    <citation type="journal article" date="2014" name="G3 (Bethesda)">
        <title>The reference genome sequence of Saccharomyces cerevisiae: Then and now.</title>
        <authorList>
            <person name="Engel S.R."/>
            <person name="Dietrich F.S."/>
            <person name="Fisk D.G."/>
            <person name="Binkley G."/>
            <person name="Balakrishnan R."/>
            <person name="Costanzo M.C."/>
            <person name="Dwight S.S."/>
            <person name="Hitz B.C."/>
            <person name="Karra K."/>
            <person name="Nash R.S."/>
            <person name="Weng S."/>
            <person name="Wong E.D."/>
            <person name="Lloyd P."/>
            <person name="Skrzypek M.S."/>
            <person name="Miyasato S.R."/>
            <person name="Simison M."/>
            <person name="Cherry J.M."/>
        </authorList>
    </citation>
    <scope>GENOME REANNOTATION</scope>
    <source>
        <strain>ATCC 204508 / S288c</strain>
    </source>
</reference>
<reference key="4">
    <citation type="journal article" date="2001" name="J. Biol. Chem.">
        <title>A family of yeast proteins mediating bidirectional vacuolar amino acid transport.</title>
        <authorList>
            <person name="Russnak R."/>
            <person name="Konczal D."/>
            <person name="McIntire S.L."/>
        </authorList>
    </citation>
    <scope>FUNCTION</scope>
    <scope>SUBCELLULAR LOCATION</scope>
</reference>
<reference key="5">
    <citation type="journal article" date="2006" name="Proc. Natl. Acad. Sci. U.S.A.">
        <title>A global topology map of the Saccharomyces cerevisiae membrane proteome.</title>
        <authorList>
            <person name="Kim H."/>
            <person name="Melen K."/>
            <person name="Oesterberg M."/>
            <person name="von Heijne G."/>
        </authorList>
    </citation>
    <scope>TOPOLOGY [LARGE SCALE ANALYSIS]</scope>
    <source>
        <strain>ATCC 208353 / W303-1A</strain>
    </source>
</reference>
<reference key="6">
    <citation type="journal article" date="2007" name="J. Proteome Res.">
        <title>Large-scale phosphorylation analysis of alpha-factor-arrested Saccharomyces cerevisiae.</title>
        <authorList>
            <person name="Li X."/>
            <person name="Gerber S.A."/>
            <person name="Rudner A.D."/>
            <person name="Beausoleil S.A."/>
            <person name="Haas W."/>
            <person name="Villen J."/>
            <person name="Elias J.E."/>
            <person name="Gygi S.P."/>
        </authorList>
    </citation>
    <scope>IDENTIFICATION BY MASS SPECTROMETRY [LARGE SCALE ANALYSIS]</scope>
    <source>
        <strain>ADR376</strain>
    </source>
</reference>
<reference key="7">
    <citation type="journal article" date="2007" name="Proc. Natl. Acad. Sci. U.S.A.">
        <title>Analysis of phosphorylation sites on proteins from Saccharomyces cerevisiae by electron transfer dissociation (ETD) mass spectrometry.</title>
        <authorList>
            <person name="Chi A."/>
            <person name="Huttenhower C."/>
            <person name="Geer L.Y."/>
            <person name="Coon J.J."/>
            <person name="Syka J.E.P."/>
            <person name="Bai D.L."/>
            <person name="Shabanowitz J."/>
            <person name="Burke D.J."/>
            <person name="Troyanskaya O.G."/>
            <person name="Hunt D.F."/>
        </authorList>
    </citation>
    <scope>PHOSPHORYLATION [LARGE SCALE ANALYSIS] AT SER-165</scope>
    <scope>IDENTIFICATION BY MASS SPECTROMETRY [LARGE SCALE ANALYSIS]</scope>
</reference>
<reference key="8">
    <citation type="journal article" date="2008" name="Mol. Cell. Proteomics">
        <title>A multidimensional chromatography technology for in-depth phosphoproteome analysis.</title>
        <authorList>
            <person name="Albuquerque C.P."/>
            <person name="Smolka M.B."/>
            <person name="Payne S.H."/>
            <person name="Bafna V."/>
            <person name="Eng J."/>
            <person name="Zhou H."/>
        </authorList>
    </citation>
    <scope>IDENTIFICATION BY MASS SPECTROMETRY [LARGE SCALE ANALYSIS]</scope>
</reference>
<reference key="9">
    <citation type="journal article" date="2009" name="Science">
        <title>Global analysis of Cdk1 substrate phosphorylation sites provides insights into evolution.</title>
        <authorList>
            <person name="Holt L.J."/>
            <person name="Tuch B.B."/>
            <person name="Villen J."/>
            <person name="Johnson A.D."/>
            <person name="Gygi S.P."/>
            <person name="Morgan D.O."/>
        </authorList>
    </citation>
    <scope>PHOSPHORYLATION [LARGE SCALE ANALYSIS] AT SER-88 AND SER-130</scope>
    <scope>IDENTIFICATION BY MASS SPECTROMETRY [LARGE SCALE ANALYSIS]</scope>
</reference>
<accession>P50944</accession>
<accession>D6W178</accession>